<proteinExistence type="evidence at protein level"/>
<reference key="1">
    <citation type="journal article" date="1978" name="Nature">
        <title>Rearrangement of genetic information may produce immunoglobulin diversity.</title>
        <authorList>
            <person name="Weigert M."/>
            <person name="Gatmaitan L."/>
            <person name="Loh E."/>
            <person name="Schilling J."/>
            <person name="Hood L.E."/>
        </authorList>
    </citation>
    <scope>PROTEIN SEQUENCE</scope>
</reference>
<protein>
    <recommendedName>
        <fullName>Ig kappa chain V-III region PC 6308</fullName>
    </recommendedName>
</protein>
<dbReference type="PIR" id="C01937">
    <property type="entry name" value="KVMS08"/>
</dbReference>
<dbReference type="BMRB" id="P01667"/>
<dbReference type="SMR" id="P01667"/>
<dbReference type="FunCoup" id="P01667">
    <property type="interactions" value="775"/>
</dbReference>
<dbReference type="jPOST" id="P01667"/>
<dbReference type="InParanoid" id="P01667"/>
<dbReference type="Proteomes" id="UP000000589">
    <property type="component" value="Unplaced"/>
</dbReference>
<dbReference type="RNAct" id="P01667">
    <property type="molecule type" value="protein"/>
</dbReference>
<dbReference type="GO" id="GO:0019814">
    <property type="term" value="C:immunoglobulin complex"/>
    <property type="evidence" value="ECO:0000318"/>
    <property type="project" value="GO_Central"/>
</dbReference>
<dbReference type="GO" id="GO:0002250">
    <property type="term" value="P:adaptive immune response"/>
    <property type="evidence" value="ECO:0007669"/>
    <property type="project" value="UniProtKB-KW"/>
</dbReference>
<dbReference type="GO" id="GO:0006955">
    <property type="term" value="P:immune response"/>
    <property type="evidence" value="ECO:0000318"/>
    <property type="project" value="GO_Central"/>
</dbReference>
<dbReference type="CDD" id="cd04980">
    <property type="entry name" value="IgV_L_kappa"/>
    <property type="match status" value="1"/>
</dbReference>
<dbReference type="FunFam" id="2.60.40.10:FF:000350">
    <property type="entry name" value="Immunoglobulin kappa chain variable 18-36"/>
    <property type="match status" value="1"/>
</dbReference>
<dbReference type="Gene3D" id="2.60.40.10">
    <property type="entry name" value="Immunoglobulins"/>
    <property type="match status" value="1"/>
</dbReference>
<dbReference type="InterPro" id="IPR007110">
    <property type="entry name" value="Ig-like_dom"/>
</dbReference>
<dbReference type="InterPro" id="IPR036179">
    <property type="entry name" value="Ig-like_dom_sf"/>
</dbReference>
<dbReference type="InterPro" id="IPR013783">
    <property type="entry name" value="Ig-like_fold"/>
</dbReference>
<dbReference type="InterPro" id="IPR003599">
    <property type="entry name" value="Ig_sub"/>
</dbReference>
<dbReference type="InterPro" id="IPR013106">
    <property type="entry name" value="Ig_V-set"/>
</dbReference>
<dbReference type="InterPro" id="IPR050150">
    <property type="entry name" value="IgV_Light_Chain"/>
</dbReference>
<dbReference type="PANTHER" id="PTHR23267">
    <property type="entry name" value="IMMUNOGLOBULIN LIGHT CHAIN"/>
    <property type="match status" value="1"/>
</dbReference>
<dbReference type="Pfam" id="PF07686">
    <property type="entry name" value="V-set"/>
    <property type="match status" value="1"/>
</dbReference>
<dbReference type="SMART" id="SM00409">
    <property type="entry name" value="IG"/>
    <property type="match status" value="1"/>
</dbReference>
<dbReference type="SMART" id="SM00406">
    <property type="entry name" value="IGv"/>
    <property type="match status" value="1"/>
</dbReference>
<dbReference type="SUPFAM" id="SSF48726">
    <property type="entry name" value="Immunoglobulin"/>
    <property type="match status" value="1"/>
</dbReference>
<dbReference type="PROSITE" id="PS50835">
    <property type="entry name" value="IG_LIKE"/>
    <property type="match status" value="1"/>
</dbReference>
<organism>
    <name type="scientific">Mus musculus</name>
    <name type="common">Mouse</name>
    <dbReference type="NCBI Taxonomy" id="10090"/>
    <lineage>
        <taxon>Eukaryota</taxon>
        <taxon>Metazoa</taxon>
        <taxon>Chordata</taxon>
        <taxon>Craniata</taxon>
        <taxon>Vertebrata</taxon>
        <taxon>Euteleostomi</taxon>
        <taxon>Mammalia</taxon>
        <taxon>Eutheria</taxon>
        <taxon>Euarchontoglires</taxon>
        <taxon>Glires</taxon>
        <taxon>Rodentia</taxon>
        <taxon>Myomorpha</taxon>
        <taxon>Muroidea</taxon>
        <taxon>Muridae</taxon>
        <taxon>Murinae</taxon>
        <taxon>Mus</taxon>
        <taxon>Mus</taxon>
    </lineage>
</organism>
<evidence type="ECO:0000255" key="1">
    <source>
        <dbReference type="PROSITE-ProRule" id="PRU00114"/>
    </source>
</evidence>
<keyword id="KW-1064">Adaptive immunity</keyword>
<keyword id="KW-0903">Direct protein sequencing</keyword>
<keyword id="KW-1015">Disulfide bond</keyword>
<keyword id="KW-0391">Immunity</keyword>
<keyword id="KW-1280">Immunoglobulin</keyword>
<keyword id="KW-1185">Reference proteome</keyword>
<feature type="chain" id="PRO_0000059789" description="Ig kappa chain V-III region PC 6308">
    <location>
        <begin position="1"/>
        <end position="111" status="greater than"/>
    </location>
</feature>
<feature type="region of interest" description="Framework-1">
    <location>
        <begin position="1"/>
        <end position="23"/>
    </location>
</feature>
<feature type="region of interest" description="Complementarity-determining-1">
    <location>
        <begin position="24"/>
        <end position="38"/>
    </location>
</feature>
<feature type="region of interest" description="Framework-2">
    <location>
        <begin position="39"/>
        <end position="53"/>
    </location>
</feature>
<feature type="region of interest" description="Complementarity-determining-2">
    <location>
        <begin position="54"/>
        <end position="60"/>
    </location>
</feature>
<feature type="region of interest" description="Framework-3">
    <location>
        <begin position="61"/>
        <end position="92"/>
    </location>
</feature>
<feature type="region of interest" description="Complementarity-determining-3">
    <location>
        <begin position="93"/>
        <end position="101"/>
    </location>
</feature>
<feature type="region of interest" description="Framework-4">
    <location>
        <begin position="102"/>
        <end position="111"/>
    </location>
</feature>
<feature type="disulfide bond" evidence="1">
    <location>
        <begin position="23"/>
        <end position="92"/>
    </location>
</feature>
<feature type="non-terminal residue">
    <location>
        <position position="111"/>
    </location>
</feature>
<name>KV3AF_MOUSE</name>
<sequence>DIVLTQSPASLAVSLGQRATISCKASQSVDYDGDSYMNWYQQKPGQPPKLLIYTASNLESGIPARFSGSGSGTDFTLNIHPVEEEDAATYYCQQSNEDPWTFGSGTKLEIK</sequence>
<accession>P01667</accession>